<keyword id="KW-0275">Fatty acid biosynthesis</keyword>
<keyword id="KW-0276">Fatty acid metabolism</keyword>
<keyword id="KW-0444">Lipid biosynthesis</keyword>
<keyword id="KW-0443">Lipid metabolism</keyword>
<keyword id="KW-0496">Mitochondrion</keyword>
<keyword id="KW-1185">Reference proteome</keyword>
<keyword id="KW-0808">Transferase</keyword>
<keyword id="KW-0809">Transit peptide</keyword>
<name>FABD_DROME</name>
<evidence type="ECO:0000250" key="1">
    <source>
        <dbReference type="UniProtKB" id="P0AAI9"/>
    </source>
</evidence>
<evidence type="ECO:0000250" key="2">
    <source>
        <dbReference type="UniProtKB" id="Q8IVS2"/>
    </source>
</evidence>
<evidence type="ECO:0000255" key="3"/>
<evidence type="ECO:0000269" key="4">
    <source>
    </source>
</evidence>
<evidence type="ECO:0000303" key="5">
    <source>
    </source>
</evidence>
<evidence type="ECO:0000305" key="6"/>
<sequence>MLAARRLLRSPRITGALSWSRWSSDAAKATTETSALLQNAEKRQQLLNELSEPLEQKGRPAIDPKETSVMLFPGQGTQYVGMAKDLLRFPGARRIFELANEVLKYDLLKICLEGPREKLNRTEHAQLAVMVSSLAALEQLREERPKAIETCVAAAGFSLGEITALVYADALPFDKALRLVQVRATAMQAACDQAAGAMAMTLYGPDTNLGEACARAQQWCLDKGVESPYCGIANYMYPHCKVVAGNVEALEFLEQNAKSFKIRRMKRLAVSGAFHTPLMQSAVEPFTKALKTVRLQDPVIRVYSNVDGKPYRHAKHILTQLPKQIVRPVKWEQTLHEMYERKQGVDFPRTFECGPGKGLVQVLEKVNAKAAQSSFNVIA</sequence>
<reference key="1">
    <citation type="journal article" date="2000" name="Science">
        <title>The genome sequence of Drosophila melanogaster.</title>
        <authorList>
            <person name="Adams M.D."/>
            <person name="Celniker S.E."/>
            <person name="Holt R.A."/>
            <person name="Evans C.A."/>
            <person name="Gocayne J.D."/>
            <person name="Amanatides P.G."/>
            <person name="Scherer S.E."/>
            <person name="Li P.W."/>
            <person name="Hoskins R.A."/>
            <person name="Galle R.F."/>
            <person name="George R.A."/>
            <person name="Lewis S.E."/>
            <person name="Richards S."/>
            <person name="Ashburner M."/>
            <person name="Henderson S.N."/>
            <person name="Sutton G.G."/>
            <person name="Wortman J.R."/>
            <person name="Yandell M.D."/>
            <person name="Zhang Q."/>
            <person name="Chen L.X."/>
            <person name="Brandon R.C."/>
            <person name="Rogers Y.-H.C."/>
            <person name="Blazej R.G."/>
            <person name="Champe M."/>
            <person name="Pfeiffer B.D."/>
            <person name="Wan K.H."/>
            <person name="Doyle C."/>
            <person name="Baxter E.G."/>
            <person name="Helt G."/>
            <person name="Nelson C.R."/>
            <person name="Miklos G.L.G."/>
            <person name="Abril J.F."/>
            <person name="Agbayani A."/>
            <person name="An H.-J."/>
            <person name="Andrews-Pfannkoch C."/>
            <person name="Baldwin D."/>
            <person name="Ballew R.M."/>
            <person name="Basu A."/>
            <person name="Baxendale J."/>
            <person name="Bayraktaroglu L."/>
            <person name="Beasley E.M."/>
            <person name="Beeson K.Y."/>
            <person name="Benos P.V."/>
            <person name="Berman B.P."/>
            <person name="Bhandari D."/>
            <person name="Bolshakov S."/>
            <person name="Borkova D."/>
            <person name="Botchan M.R."/>
            <person name="Bouck J."/>
            <person name="Brokstein P."/>
            <person name="Brottier P."/>
            <person name="Burtis K.C."/>
            <person name="Busam D.A."/>
            <person name="Butler H."/>
            <person name="Cadieu E."/>
            <person name="Center A."/>
            <person name="Chandra I."/>
            <person name="Cherry J.M."/>
            <person name="Cawley S."/>
            <person name="Dahlke C."/>
            <person name="Davenport L.B."/>
            <person name="Davies P."/>
            <person name="de Pablos B."/>
            <person name="Delcher A."/>
            <person name="Deng Z."/>
            <person name="Mays A.D."/>
            <person name="Dew I."/>
            <person name="Dietz S.M."/>
            <person name="Dodson K."/>
            <person name="Doup L.E."/>
            <person name="Downes M."/>
            <person name="Dugan-Rocha S."/>
            <person name="Dunkov B.C."/>
            <person name="Dunn P."/>
            <person name="Durbin K.J."/>
            <person name="Evangelista C.C."/>
            <person name="Ferraz C."/>
            <person name="Ferriera S."/>
            <person name="Fleischmann W."/>
            <person name="Fosler C."/>
            <person name="Gabrielian A.E."/>
            <person name="Garg N.S."/>
            <person name="Gelbart W.M."/>
            <person name="Glasser K."/>
            <person name="Glodek A."/>
            <person name="Gong F."/>
            <person name="Gorrell J.H."/>
            <person name="Gu Z."/>
            <person name="Guan P."/>
            <person name="Harris M."/>
            <person name="Harris N.L."/>
            <person name="Harvey D.A."/>
            <person name="Heiman T.J."/>
            <person name="Hernandez J.R."/>
            <person name="Houck J."/>
            <person name="Hostin D."/>
            <person name="Houston K.A."/>
            <person name="Howland T.J."/>
            <person name="Wei M.-H."/>
            <person name="Ibegwam C."/>
            <person name="Jalali M."/>
            <person name="Kalush F."/>
            <person name="Karpen G.H."/>
            <person name="Ke Z."/>
            <person name="Kennison J.A."/>
            <person name="Ketchum K.A."/>
            <person name="Kimmel B.E."/>
            <person name="Kodira C.D."/>
            <person name="Kraft C.L."/>
            <person name="Kravitz S."/>
            <person name="Kulp D."/>
            <person name="Lai Z."/>
            <person name="Lasko P."/>
            <person name="Lei Y."/>
            <person name="Levitsky A.A."/>
            <person name="Li J.H."/>
            <person name="Li Z."/>
            <person name="Liang Y."/>
            <person name="Lin X."/>
            <person name="Liu X."/>
            <person name="Mattei B."/>
            <person name="McIntosh T.C."/>
            <person name="McLeod M.P."/>
            <person name="McPherson D."/>
            <person name="Merkulov G."/>
            <person name="Milshina N.V."/>
            <person name="Mobarry C."/>
            <person name="Morris J."/>
            <person name="Moshrefi A."/>
            <person name="Mount S.M."/>
            <person name="Moy M."/>
            <person name="Murphy B."/>
            <person name="Murphy L."/>
            <person name="Muzny D.M."/>
            <person name="Nelson D.L."/>
            <person name="Nelson D.R."/>
            <person name="Nelson K.A."/>
            <person name="Nixon K."/>
            <person name="Nusskern D.R."/>
            <person name="Pacleb J.M."/>
            <person name="Palazzolo M."/>
            <person name="Pittman G.S."/>
            <person name="Pan S."/>
            <person name="Pollard J."/>
            <person name="Puri V."/>
            <person name="Reese M.G."/>
            <person name="Reinert K."/>
            <person name="Remington K."/>
            <person name="Saunders R.D.C."/>
            <person name="Scheeler F."/>
            <person name="Shen H."/>
            <person name="Shue B.C."/>
            <person name="Siden-Kiamos I."/>
            <person name="Simpson M."/>
            <person name="Skupski M.P."/>
            <person name="Smith T.J."/>
            <person name="Spier E."/>
            <person name="Spradling A.C."/>
            <person name="Stapleton M."/>
            <person name="Strong R."/>
            <person name="Sun E."/>
            <person name="Svirskas R."/>
            <person name="Tector C."/>
            <person name="Turner R."/>
            <person name="Venter E."/>
            <person name="Wang A.H."/>
            <person name="Wang X."/>
            <person name="Wang Z.-Y."/>
            <person name="Wassarman D.A."/>
            <person name="Weinstock G.M."/>
            <person name="Weissenbach J."/>
            <person name="Williams S.M."/>
            <person name="Woodage T."/>
            <person name="Worley K.C."/>
            <person name="Wu D."/>
            <person name="Yang S."/>
            <person name="Yao Q.A."/>
            <person name="Ye J."/>
            <person name="Yeh R.-F."/>
            <person name="Zaveri J.S."/>
            <person name="Zhan M."/>
            <person name="Zhang G."/>
            <person name="Zhao Q."/>
            <person name="Zheng L."/>
            <person name="Zheng X.H."/>
            <person name="Zhong F.N."/>
            <person name="Zhong W."/>
            <person name="Zhou X."/>
            <person name="Zhu S.C."/>
            <person name="Zhu X."/>
            <person name="Smith H.O."/>
            <person name="Gibbs R.A."/>
            <person name="Myers E.W."/>
            <person name="Rubin G.M."/>
            <person name="Venter J.C."/>
        </authorList>
    </citation>
    <scope>NUCLEOTIDE SEQUENCE [LARGE SCALE GENOMIC DNA]</scope>
    <source>
        <strain>Berkeley</strain>
    </source>
</reference>
<reference key="2">
    <citation type="journal article" date="2002" name="Genome Biol.">
        <title>Annotation of the Drosophila melanogaster euchromatic genome: a systematic review.</title>
        <authorList>
            <person name="Misra S."/>
            <person name="Crosby M.A."/>
            <person name="Mungall C.J."/>
            <person name="Matthews B.B."/>
            <person name="Campbell K.S."/>
            <person name="Hradecky P."/>
            <person name="Huang Y."/>
            <person name="Kaminker J.S."/>
            <person name="Millburn G.H."/>
            <person name="Prochnik S.E."/>
            <person name="Smith C.D."/>
            <person name="Tupy J.L."/>
            <person name="Whitfield E.J."/>
            <person name="Bayraktaroglu L."/>
            <person name="Berman B.P."/>
            <person name="Bettencourt B.R."/>
            <person name="Celniker S.E."/>
            <person name="de Grey A.D.N.J."/>
            <person name="Drysdale R.A."/>
            <person name="Harris N.L."/>
            <person name="Richter J."/>
            <person name="Russo S."/>
            <person name="Schroeder A.J."/>
            <person name="Shu S.Q."/>
            <person name="Stapleton M."/>
            <person name="Yamada C."/>
            <person name="Ashburner M."/>
            <person name="Gelbart W.M."/>
            <person name="Rubin G.M."/>
            <person name="Lewis S.E."/>
        </authorList>
    </citation>
    <scope>GENOME REANNOTATION</scope>
    <source>
        <strain>Berkeley</strain>
    </source>
</reference>
<reference key="3">
    <citation type="journal article" date="2002" name="Genome Biol.">
        <title>A Drosophila full-length cDNA resource.</title>
        <authorList>
            <person name="Stapleton M."/>
            <person name="Carlson J.W."/>
            <person name="Brokstein P."/>
            <person name="Yu C."/>
            <person name="Champe M."/>
            <person name="George R.A."/>
            <person name="Guarin H."/>
            <person name="Kronmiller B."/>
            <person name="Pacleb J.M."/>
            <person name="Park S."/>
            <person name="Wan K.H."/>
            <person name="Rubin G.M."/>
            <person name="Celniker S.E."/>
        </authorList>
    </citation>
    <scope>NUCLEOTIDE SEQUENCE [LARGE SCALE MRNA]</scope>
    <source>
        <strain>Berkeley</strain>
        <tissue>Ovary</tissue>
    </source>
</reference>
<reference key="4">
    <citation type="submission" date="2008-11" db="EMBL/GenBank/DDBJ databases">
        <authorList>
            <person name="Carlson J.W."/>
            <person name="Booth B."/>
            <person name="Frise E."/>
            <person name="Park S."/>
            <person name="Wan K.H."/>
            <person name="Yu C."/>
            <person name="Celniker S.E."/>
        </authorList>
    </citation>
    <scope>NUCLEOTIDE SEQUENCE [LARGE SCALE MRNA]</scope>
    <source>
        <strain>Berkeley</strain>
    </source>
</reference>
<reference key="5">
    <citation type="journal article" date="2008" name="Genetics">
        <title>Conditional switches for extracellular matrix patterning in Drosophila melanogaster.</title>
        <authorList>
            <person name="Khokhar A."/>
            <person name="Chen N."/>
            <person name="Yuan J.-P."/>
            <person name="Li Y."/>
            <person name="Landis G.N."/>
            <person name="Beaulieu G."/>
            <person name="Kaur H."/>
            <person name="Tower J."/>
        </authorList>
    </citation>
    <scope>DISRUPTION PHENOTYPE</scope>
</reference>
<dbReference type="EC" id="2.3.1.39" evidence="2"/>
<dbReference type="EMBL" id="AE014296">
    <property type="protein sequence ID" value="AAF49377.1"/>
    <property type="molecule type" value="Genomic_DNA"/>
</dbReference>
<dbReference type="EMBL" id="AY094770">
    <property type="protein sequence ID" value="AAM11123.1"/>
    <property type="molecule type" value="mRNA"/>
</dbReference>
<dbReference type="EMBL" id="BT050494">
    <property type="protein sequence ID" value="ACJ13201.1"/>
    <property type="molecule type" value="mRNA"/>
</dbReference>
<dbReference type="RefSeq" id="NP_648950.1">
    <property type="nucleotide sequence ID" value="NM_140693.3"/>
</dbReference>
<dbReference type="SMR" id="Q8T3L6"/>
<dbReference type="BioGRID" id="65205">
    <property type="interactions" value="1"/>
</dbReference>
<dbReference type="FunCoup" id="Q8T3L6">
    <property type="interactions" value="1545"/>
</dbReference>
<dbReference type="IntAct" id="Q8T3L6">
    <property type="interactions" value="5"/>
</dbReference>
<dbReference type="STRING" id="7227.FBpp0075038"/>
<dbReference type="PaxDb" id="7227-FBpp0075038"/>
<dbReference type="DNASU" id="39910"/>
<dbReference type="EnsemblMetazoa" id="FBtr0075278">
    <property type="protein sequence ID" value="FBpp0075038"/>
    <property type="gene ID" value="FBgn0036691"/>
</dbReference>
<dbReference type="GeneID" id="39910"/>
<dbReference type="KEGG" id="dme:Dmel_CG7842"/>
<dbReference type="UCSC" id="CG7842-RA">
    <property type="organism name" value="d. melanogaster"/>
</dbReference>
<dbReference type="AGR" id="FB:FBgn0036691"/>
<dbReference type="CTD" id="39910"/>
<dbReference type="FlyBase" id="FBgn0036691">
    <property type="gene designation" value="beg"/>
</dbReference>
<dbReference type="VEuPathDB" id="VectorBase:FBgn0036691"/>
<dbReference type="eggNOG" id="KOG2926">
    <property type="taxonomic scope" value="Eukaryota"/>
</dbReference>
<dbReference type="GeneTree" id="ENSGT00390000013715"/>
<dbReference type="HOGENOM" id="CLU_030558_2_1_1"/>
<dbReference type="InParanoid" id="Q8T3L6"/>
<dbReference type="OMA" id="AANYNCP"/>
<dbReference type="OrthoDB" id="541883at2759"/>
<dbReference type="PhylomeDB" id="Q8T3L6"/>
<dbReference type="Reactome" id="R-DME-77289">
    <property type="pathway name" value="Mitochondrial Fatty Acid Beta-Oxidation"/>
</dbReference>
<dbReference type="UniPathway" id="UPA00094"/>
<dbReference type="BioGRID-ORCS" id="39910">
    <property type="hits" value="1 hit in 1 CRISPR screen"/>
</dbReference>
<dbReference type="GenomeRNAi" id="39910"/>
<dbReference type="PRO" id="PR:Q8T3L6"/>
<dbReference type="Proteomes" id="UP000000803">
    <property type="component" value="Chromosome 3L"/>
</dbReference>
<dbReference type="Bgee" id="FBgn0036691">
    <property type="expression patterns" value="Expressed in adult middle midgut class II enteroendocrine cell in adult midgut (Drosophila) and 53 other cell types or tissues"/>
</dbReference>
<dbReference type="GO" id="GO:0005739">
    <property type="term" value="C:mitochondrion"/>
    <property type="evidence" value="ECO:0000250"/>
    <property type="project" value="UniProtKB"/>
</dbReference>
<dbReference type="GO" id="GO:0004314">
    <property type="term" value="F:[acyl-carrier-protein] S-malonyltransferase activity"/>
    <property type="evidence" value="ECO:0000250"/>
    <property type="project" value="UniProtKB"/>
</dbReference>
<dbReference type="GO" id="GO:0006633">
    <property type="term" value="P:fatty acid biosynthetic process"/>
    <property type="evidence" value="ECO:0000250"/>
    <property type="project" value="UniProtKB"/>
</dbReference>
<dbReference type="FunFam" id="3.30.70.250:FF:000005">
    <property type="entry name" value="Malonyl-CoA-acyl carrier protein transacylase, mitochondrial"/>
    <property type="match status" value="1"/>
</dbReference>
<dbReference type="Gene3D" id="3.30.70.250">
    <property type="entry name" value="Malonyl-CoA ACP transacylase, ACP-binding"/>
    <property type="match status" value="1"/>
</dbReference>
<dbReference type="Gene3D" id="3.40.366.10">
    <property type="entry name" value="Malonyl-Coenzyme A Acyl Carrier Protein, domain 2"/>
    <property type="match status" value="1"/>
</dbReference>
<dbReference type="InterPro" id="IPR001227">
    <property type="entry name" value="Ac_transferase_dom_sf"/>
</dbReference>
<dbReference type="InterPro" id="IPR014043">
    <property type="entry name" value="Acyl_transferase_dom"/>
</dbReference>
<dbReference type="InterPro" id="IPR016035">
    <property type="entry name" value="Acyl_Trfase/lysoPLipase"/>
</dbReference>
<dbReference type="InterPro" id="IPR016036">
    <property type="entry name" value="Malonyl_transacylase_ACP-bd"/>
</dbReference>
<dbReference type="InterPro" id="IPR052760">
    <property type="entry name" value="Mitochondrial_malonyltrans"/>
</dbReference>
<dbReference type="PANTHER" id="PTHR47170">
    <property type="entry name" value="MALONYL-COA ACP TRANSACYLASE, ACP-BINDING"/>
    <property type="match status" value="1"/>
</dbReference>
<dbReference type="PANTHER" id="PTHR47170:SF2">
    <property type="entry name" value="MALONYL-COA:ACP TRANSACYLASE (MAT) DOMAIN-CONTAINING PROTEIN"/>
    <property type="match status" value="1"/>
</dbReference>
<dbReference type="Pfam" id="PF00698">
    <property type="entry name" value="Acyl_transf_1"/>
    <property type="match status" value="1"/>
</dbReference>
<dbReference type="SMART" id="SM00827">
    <property type="entry name" value="PKS_AT"/>
    <property type="match status" value="1"/>
</dbReference>
<dbReference type="SUPFAM" id="SSF52151">
    <property type="entry name" value="FabD/lysophospholipase-like"/>
    <property type="match status" value="1"/>
</dbReference>
<dbReference type="SUPFAM" id="SSF55048">
    <property type="entry name" value="Probable ACP-binding domain of malonyl-CoA ACP transacylase"/>
    <property type="match status" value="1"/>
</dbReference>
<gene>
    <name evidence="5" type="primary">beg</name>
    <name type="ORF">CG7842</name>
</gene>
<comment type="function">
    <text evidence="2">Catalyzes the transfer of a malonyl moiety from malonyl-CoA to the free thiol group of the phosphopantetheine arm of the ACP protein. This suggests the existence of the biosynthesis of fatty acids in mitochondria (By similarity).</text>
</comment>
<comment type="catalytic activity">
    <reaction>
        <text>holo-[ACP] + malonyl-CoA = malonyl-[ACP] + CoA</text>
        <dbReference type="Rhea" id="RHEA:41792"/>
        <dbReference type="Rhea" id="RHEA-COMP:9623"/>
        <dbReference type="Rhea" id="RHEA-COMP:9685"/>
        <dbReference type="ChEBI" id="CHEBI:57287"/>
        <dbReference type="ChEBI" id="CHEBI:57384"/>
        <dbReference type="ChEBI" id="CHEBI:64479"/>
        <dbReference type="ChEBI" id="CHEBI:78449"/>
        <dbReference type="EC" id="2.3.1.39"/>
    </reaction>
</comment>
<comment type="pathway">
    <text evidence="2">Lipid metabolism; fatty acid biosynthesis.</text>
</comment>
<comment type="subcellular location">
    <subcellularLocation>
        <location evidence="2">Mitochondrion</location>
    </subcellularLocation>
</comment>
<comment type="disruption phenotype">
    <text evidence="4">Eggs have a thin shell.</text>
</comment>
<comment type="similarity">
    <text evidence="6">Belongs to the type II malonyltransferase family.</text>
</comment>
<organism>
    <name type="scientific">Drosophila melanogaster</name>
    <name type="common">Fruit fly</name>
    <dbReference type="NCBI Taxonomy" id="7227"/>
    <lineage>
        <taxon>Eukaryota</taxon>
        <taxon>Metazoa</taxon>
        <taxon>Ecdysozoa</taxon>
        <taxon>Arthropoda</taxon>
        <taxon>Hexapoda</taxon>
        <taxon>Insecta</taxon>
        <taxon>Pterygota</taxon>
        <taxon>Neoptera</taxon>
        <taxon>Endopterygota</taxon>
        <taxon>Diptera</taxon>
        <taxon>Brachycera</taxon>
        <taxon>Muscomorpha</taxon>
        <taxon>Ephydroidea</taxon>
        <taxon>Drosophilidae</taxon>
        <taxon>Drosophila</taxon>
        <taxon>Sophophora</taxon>
    </lineage>
</organism>
<protein>
    <recommendedName>
        <fullName>Probable malonyl-CoA-acyl carrier protein transacylase, mitochondrial</fullName>
        <shortName>MCT</shortName>
        <ecNumber evidence="2">2.3.1.39</ecNumber>
    </recommendedName>
    <alternativeName>
        <fullName evidence="5">Bad egg</fullName>
    </alternativeName>
    <alternativeName>
        <fullName>[Acyl-carrier-protein] malonyltransferase</fullName>
    </alternativeName>
</protein>
<proteinExistence type="evidence at transcript level"/>
<feature type="transit peptide" description="Mitochondrion" evidence="3">
    <location>
        <begin position="1"/>
        <end position="23"/>
    </location>
</feature>
<feature type="chain" id="PRO_0000000590" description="Probable malonyl-CoA-acyl carrier protein transacylase, mitochondrial">
    <location>
        <begin position="24"/>
        <end position="379"/>
    </location>
</feature>
<feature type="active site" evidence="1">
    <location>
        <position position="158"/>
    </location>
</feature>
<feature type="active site" evidence="1">
    <location>
        <position position="275"/>
    </location>
</feature>
<feature type="sequence conflict" description="In Ref. 3; AAM11123." evidence="6" ref="3">
    <original>A</original>
    <variation>T</variation>
    <location>
        <position position="61"/>
    </location>
</feature>
<accession>Q8T3L6</accession>
<accession>B6IDQ4</accession>
<accession>Q9VVD5</accession>